<keyword id="KW-0998">Cell outer membrane</keyword>
<keyword id="KW-1015">Disulfide bond</keyword>
<keyword id="KW-1029">Fimbrium biogenesis</keyword>
<keyword id="KW-0472">Membrane</keyword>
<keyword id="KW-0614">Plasmid</keyword>
<keyword id="KW-0732">Signal</keyword>
<keyword id="KW-0812">Transmembrane</keyword>
<keyword id="KW-1134">Transmembrane beta strand</keyword>
<keyword id="KW-0813">Transport</keyword>
<accession>P46005</accession>
<dbReference type="EMBL" id="U12894">
    <property type="protein sequence ID" value="AAA57452.1"/>
    <property type="molecule type" value="Genomic_DNA"/>
</dbReference>
<dbReference type="PIR" id="B55853">
    <property type="entry name" value="B55853"/>
</dbReference>
<dbReference type="SMR" id="P46005"/>
<dbReference type="GO" id="GO:0009279">
    <property type="term" value="C:cell outer membrane"/>
    <property type="evidence" value="ECO:0007669"/>
    <property type="project" value="UniProtKB-SubCell"/>
</dbReference>
<dbReference type="GO" id="GO:0015473">
    <property type="term" value="F:fimbrial usher porin activity"/>
    <property type="evidence" value="ECO:0007669"/>
    <property type="project" value="InterPro"/>
</dbReference>
<dbReference type="GO" id="GO:0009297">
    <property type="term" value="P:pilus assembly"/>
    <property type="evidence" value="ECO:0007669"/>
    <property type="project" value="InterPro"/>
</dbReference>
<dbReference type="FunFam" id="2.60.40.2610:FF:000001">
    <property type="entry name" value="Outer membrane fimbrial usher protein"/>
    <property type="match status" value="1"/>
</dbReference>
<dbReference type="FunFam" id="2.60.40.3110:FF:000001">
    <property type="entry name" value="Putative fimbrial outer membrane usher"/>
    <property type="match status" value="1"/>
</dbReference>
<dbReference type="Gene3D" id="2.60.40.2070">
    <property type="match status" value="1"/>
</dbReference>
<dbReference type="Gene3D" id="2.60.40.3110">
    <property type="match status" value="1"/>
</dbReference>
<dbReference type="Gene3D" id="3.10.20.410">
    <property type="match status" value="1"/>
</dbReference>
<dbReference type="Gene3D" id="2.60.40.2610">
    <property type="entry name" value="Outer membrane usher protein FimD, plug domain"/>
    <property type="match status" value="1"/>
</dbReference>
<dbReference type="InterPro" id="IPR000015">
    <property type="entry name" value="Fimb_usher"/>
</dbReference>
<dbReference type="InterPro" id="IPR018030">
    <property type="entry name" value="Fimbrial_membr_usher_CS"/>
</dbReference>
<dbReference type="InterPro" id="IPR042186">
    <property type="entry name" value="FimD_plug_dom"/>
</dbReference>
<dbReference type="InterPro" id="IPR025949">
    <property type="entry name" value="PapC-like_C"/>
</dbReference>
<dbReference type="InterPro" id="IPR043142">
    <property type="entry name" value="PapC-like_C_sf"/>
</dbReference>
<dbReference type="InterPro" id="IPR025885">
    <property type="entry name" value="PapC_N"/>
</dbReference>
<dbReference type="InterPro" id="IPR037224">
    <property type="entry name" value="PapC_N_sf"/>
</dbReference>
<dbReference type="PANTHER" id="PTHR30451:SF9">
    <property type="entry name" value="F1 CAPSULE-ANCHORING PROTEIN"/>
    <property type="match status" value="1"/>
</dbReference>
<dbReference type="PANTHER" id="PTHR30451">
    <property type="entry name" value="OUTER MEMBRANE USHER PROTEIN"/>
    <property type="match status" value="1"/>
</dbReference>
<dbReference type="Pfam" id="PF13953">
    <property type="entry name" value="PapC_C"/>
    <property type="match status" value="1"/>
</dbReference>
<dbReference type="Pfam" id="PF13954">
    <property type="entry name" value="PapC_N"/>
    <property type="match status" value="1"/>
</dbReference>
<dbReference type="Pfam" id="PF00577">
    <property type="entry name" value="Usher"/>
    <property type="match status" value="1"/>
</dbReference>
<dbReference type="SUPFAM" id="SSF141729">
    <property type="entry name" value="FimD N-terminal domain-like"/>
    <property type="match status" value="1"/>
</dbReference>
<dbReference type="PROSITE" id="PS01151">
    <property type="entry name" value="FIMBRIAL_USHER"/>
    <property type="match status" value="1"/>
</dbReference>
<geneLocation type="plasmid">
    <name>P17-2</name>
</geneLocation>
<name>AGGC_ECOLX</name>
<reference key="1">
    <citation type="journal article" date="1994" name="J. Bacteriol.">
        <title>Identification and characterization of a gene cluster mediating enteroaggregative Escherichia coli aggregative adherence fimbria I biogenesis.</title>
        <authorList>
            <person name="Savarino S.J."/>
            <person name="Fox P."/>
            <person name="Deng Y."/>
            <person name="Nataro J.P."/>
        </authorList>
    </citation>
    <scope>NUCLEOTIDE SEQUENCE [GENOMIC DNA]</scope>
    <source>
        <strain>O3:H2 / 17-2 / EAggEC</strain>
    </source>
</reference>
<gene>
    <name type="primary">aggC</name>
</gene>
<feature type="signal peptide" evidence="2">
    <location>
        <begin position="1"/>
        <end position="21"/>
    </location>
</feature>
<feature type="chain" id="PRO_0000009299" description="Outer membrane usher protein AggC">
    <location>
        <begin position="22"/>
        <end position="842"/>
    </location>
</feature>
<feature type="disulfide bond" evidence="2">
    <location>
        <begin position="819"/>
        <end position="841"/>
    </location>
</feature>
<sequence length="842" mass="93321">MKTSSFIIVILLCFRIENVIAHTFSFDASLLNHGSGGIDLTLLEKGGQLPGIYPVDIILNGSRIDSRDIFFYTKKNRHGEYYLKPCLTRDILINYGVKTEEYPNLFRQNSEKNRDSSDCADLSVIPQATEDYHFIKQQLILGIPQVAIRPPLTGIAHETMWDDGISAFLLNWQVEGSHWEYRSNTRNSSDNFWASLEPGINLGSWRIRNLTTWNKSSGQSGKWESSYIRVERGLNNIKSRLTFGDDYTPSDIFDSVPFRGGMLGSDENMVPYNQREFAPVVRGIARTQARIEVRQNGYLIQSRIVSPGAFALTDLPVTGNGGDLQVWVLESDGTIQTFNVPFTTPAIALREGYLKYNVTVGEYRPSDDSIEGAYLGQLTAMYGLPWSLTAFGGIQVSEHYQGNALGLGLSLGGFGSISLDTIYSRGQQKGYSNEIGKTWRVRYDKSFELTGTSFAAGYQDSSAGYHSLADVLDTYRNGTAYRSYDNRIRRTTINISQALGEWGSVALNGGRDEYRDKVKQDYIGASYSNSWKGITFAVNWSRNNNIGDYYSNSLRTENNLNLWMSIPMKRWLGGDDKGVTATAQIQRITGQNTLYETGLNGRAFGQKLYWDIREQIVPGSKYDADTSLLNLRWSGGYGELTGMYSYNRNTRQMNVGTSGSMAIHSGGIAFGQKTDDTMALIAAPGIAGASVGGWPGVSTDFRGYTLVGHVSPYQENIITLDPTTFPDNTEVSQTDRRVIPTKGALVQAEFKTRVGNRALVTLTRKDGTLLPFGTVVTLERKTGEAFESAGVVDDKGKVYLSGLSEAGKLKAQWGTNSQCYADYKLPLKKGMSGIFLTRAVCM</sequence>
<proteinExistence type="inferred from homology"/>
<evidence type="ECO:0000250" key="1"/>
<evidence type="ECO:0000255" key="2"/>
<evidence type="ECO:0000305" key="3"/>
<organism>
    <name type="scientific">Escherichia coli</name>
    <dbReference type="NCBI Taxonomy" id="562"/>
    <lineage>
        <taxon>Bacteria</taxon>
        <taxon>Pseudomonadati</taxon>
        <taxon>Pseudomonadota</taxon>
        <taxon>Gammaproteobacteria</taxon>
        <taxon>Enterobacterales</taxon>
        <taxon>Enterobacteriaceae</taxon>
        <taxon>Escherichia</taxon>
    </lineage>
</organism>
<protein>
    <recommendedName>
        <fullName>Outer membrane usher protein AggC</fullName>
    </recommendedName>
</protein>
<comment type="function">
    <text>Involved in the export and assembly of the AAF/I fimbriae subunits across the outer membrane.</text>
</comment>
<comment type="subcellular location">
    <subcellularLocation>
        <location evidence="1">Cell outer membrane</location>
        <topology evidence="1">Multi-pass membrane protein</topology>
    </subcellularLocation>
</comment>
<comment type="similarity">
    <text evidence="3">Belongs to the fimbrial export usher family.</text>
</comment>